<accession>B7MIY2</accession>
<protein>
    <recommendedName>
        <fullName evidence="1">NAD-capped RNA hydrolase NudC</fullName>
        <shortName evidence="1">DeNADding enzyme NudC</shortName>
        <ecNumber evidence="1">3.6.1.-</ecNumber>
    </recommendedName>
    <alternativeName>
        <fullName evidence="1">NADH pyrophosphatase</fullName>
        <ecNumber evidence="1">3.6.1.22</ecNumber>
    </alternativeName>
</protein>
<reference key="1">
    <citation type="journal article" date="2009" name="PLoS Genet.">
        <title>Organised genome dynamics in the Escherichia coli species results in highly diverse adaptive paths.</title>
        <authorList>
            <person name="Touchon M."/>
            <person name="Hoede C."/>
            <person name="Tenaillon O."/>
            <person name="Barbe V."/>
            <person name="Baeriswyl S."/>
            <person name="Bidet P."/>
            <person name="Bingen E."/>
            <person name="Bonacorsi S."/>
            <person name="Bouchier C."/>
            <person name="Bouvet O."/>
            <person name="Calteau A."/>
            <person name="Chiapello H."/>
            <person name="Clermont O."/>
            <person name="Cruveiller S."/>
            <person name="Danchin A."/>
            <person name="Diard M."/>
            <person name="Dossat C."/>
            <person name="Karoui M.E."/>
            <person name="Frapy E."/>
            <person name="Garry L."/>
            <person name="Ghigo J.M."/>
            <person name="Gilles A.M."/>
            <person name="Johnson J."/>
            <person name="Le Bouguenec C."/>
            <person name="Lescat M."/>
            <person name="Mangenot S."/>
            <person name="Martinez-Jehanne V."/>
            <person name="Matic I."/>
            <person name="Nassif X."/>
            <person name="Oztas S."/>
            <person name="Petit M.A."/>
            <person name="Pichon C."/>
            <person name="Rouy Z."/>
            <person name="Ruf C.S."/>
            <person name="Schneider D."/>
            <person name="Tourret J."/>
            <person name="Vacherie B."/>
            <person name="Vallenet D."/>
            <person name="Medigue C."/>
            <person name="Rocha E.P.C."/>
            <person name="Denamur E."/>
        </authorList>
    </citation>
    <scope>NUCLEOTIDE SEQUENCE [LARGE SCALE GENOMIC DNA]</scope>
    <source>
        <strain>S88 / ExPEC</strain>
    </source>
</reference>
<dbReference type="EC" id="3.6.1.-" evidence="1"/>
<dbReference type="EC" id="3.6.1.22" evidence="1"/>
<dbReference type="EMBL" id="CU928161">
    <property type="protein sequence ID" value="CAR05626.1"/>
    <property type="molecule type" value="Genomic_DNA"/>
</dbReference>
<dbReference type="RefSeq" id="WP_000373935.1">
    <property type="nucleotide sequence ID" value="NC_011742.1"/>
</dbReference>
<dbReference type="SMR" id="B7MIY2"/>
<dbReference type="KEGG" id="ecz:ECS88_4457"/>
<dbReference type="HOGENOM" id="CLU_037162_0_1_6"/>
<dbReference type="Proteomes" id="UP000000747">
    <property type="component" value="Chromosome"/>
</dbReference>
<dbReference type="GO" id="GO:0005829">
    <property type="term" value="C:cytosol"/>
    <property type="evidence" value="ECO:0007669"/>
    <property type="project" value="TreeGrafter"/>
</dbReference>
<dbReference type="GO" id="GO:0000287">
    <property type="term" value="F:magnesium ion binding"/>
    <property type="evidence" value="ECO:0007669"/>
    <property type="project" value="UniProtKB-UniRule"/>
</dbReference>
<dbReference type="GO" id="GO:0030145">
    <property type="term" value="F:manganese ion binding"/>
    <property type="evidence" value="ECO:0007669"/>
    <property type="project" value="UniProtKB-UniRule"/>
</dbReference>
<dbReference type="GO" id="GO:0000210">
    <property type="term" value="F:NAD+ diphosphatase activity"/>
    <property type="evidence" value="ECO:0007669"/>
    <property type="project" value="UniProtKB-UniRule"/>
</dbReference>
<dbReference type="GO" id="GO:0035529">
    <property type="term" value="F:NADH pyrophosphatase activity"/>
    <property type="evidence" value="ECO:0007669"/>
    <property type="project" value="TreeGrafter"/>
</dbReference>
<dbReference type="GO" id="GO:0110153">
    <property type="term" value="F:RNA NAD-cap (NMN-forming) hydrolase activity"/>
    <property type="evidence" value="ECO:0007669"/>
    <property type="project" value="RHEA"/>
</dbReference>
<dbReference type="GO" id="GO:0008270">
    <property type="term" value="F:zinc ion binding"/>
    <property type="evidence" value="ECO:0007669"/>
    <property type="project" value="UniProtKB-UniRule"/>
</dbReference>
<dbReference type="GO" id="GO:0019677">
    <property type="term" value="P:NAD catabolic process"/>
    <property type="evidence" value="ECO:0007669"/>
    <property type="project" value="TreeGrafter"/>
</dbReference>
<dbReference type="GO" id="GO:0006734">
    <property type="term" value="P:NADH metabolic process"/>
    <property type="evidence" value="ECO:0007669"/>
    <property type="project" value="TreeGrafter"/>
</dbReference>
<dbReference type="GO" id="GO:0006742">
    <property type="term" value="P:NADP catabolic process"/>
    <property type="evidence" value="ECO:0007669"/>
    <property type="project" value="TreeGrafter"/>
</dbReference>
<dbReference type="CDD" id="cd03429">
    <property type="entry name" value="NUDIX_NADH_pyrophosphatase_Nudt13"/>
    <property type="match status" value="1"/>
</dbReference>
<dbReference type="FunFam" id="3.90.79.10:FF:000004">
    <property type="entry name" value="NADH pyrophosphatase"/>
    <property type="match status" value="1"/>
</dbReference>
<dbReference type="FunFam" id="3.90.79.20:FF:000001">
    <property type="entry name" value="NADH pyrophosphatase"/>
    <property type="match status" value="1"/>
</dbReference>
<dbReference type="Gene3D" id="3.90.79.20">
    <property type="match status" value="1"/>
</dbReference>
<dbReference type="Gene3D" id="3.90.79.10">
    <property type="entry name" value="Nucleoside Triphosphate Pyrophosphohydrolase"/>
    <property type="match status" value="1"/>
</dbReference>
<dbReference type="HAMAP" id="MF_00297">
    <property type="entry name" value="Nudix_NudC"/>
    <property type="match status" value="1"/>
</dbReference>
<dbReference type="InterPro" id="IPR050241">
    <property type="entry name" value="NAD-cap_RNA_hydrolase_NudC"/>
</dbReference>
<dbReference type="InterPro" id="IPR049734">
    <property type="entry name" value="NudC-like_C"/>
</dbReference>
<dbReference type="InterPro" id="IPR015797">
    <property type="entry name" value="NUDIX_hydrolase-like_dom_sf"/>
</dbReference>
<dbReference type="InterPro" id="IPR020084">
    <property type="entry name" value="NUDIX_hydrolase_CS"/>
</dbReference>
<dbReference type="InterPro" id="IPR000086">
    <property type="entry name" value="NUDIX_hydrolase_dom"/>
</dbReference>
<dbReference type="InterPro" id="IPR022925">
    <property type="entry name" value="RNA_Hydrolase_NudC"/>
</dbReference>
<dbReference type="InterPro" id="IPR015376">
    <property type="entry name" value="Znr_NADH_PPase"/>
</dbReference>
<dbReference type="NCBIfam" id="NF001299">
    <property type="entry name" value="PRK00241.1"/>
    <property type="match status" value="1"/>
</dbReference>
<dbReference type="PANTHER" id="PTHR42904:SF6">
    <property type="entry name" value="NAD-CAPPED RNA HYDROLASE NUDT12"/>
    <property type="match status" value="1"/>
</dbReference>
<dbReference type="PANTHER" id="PTHR42904">
    <property type="entry name" value="NUDIX HYDROLASE, NUDC SUBFAMILY"/>
    <property type="match status" value="1"/>
</dbReference>
<dbReference type="Pfam" id="PF00293">
    <property type="entry name" value="NUDIX"/>
    <property type="match status" value="1"/>
</dbReference>
<dbReference type="Pfam" id="PF09297">
    <property type="entry name" value="Zn_ribbon_NUD"/>
    <property type="match status" value="1"/>
</dbReference>
<dbReference type="SUPFAM" id="SSF55811">
    <property type="entry name" value="Nudix"/>
    <property type="match status" value="2"/>
</dbReference>
<dbReference type="PROSITE" id="PS51462">
    <property type="entry name" value="NUDIX"/>
    <property type="match status" value="1"/>
</dbReference>
<dbReference type="PROSITE" id="PS00893">
    <property type="entry name" value="NUDIX_BOX"/>
    <property type="match status" value="1"/>
</dbReference>
<comment type="function">
    <text evidence="1">mRNA decapping enzyme that specifically removes the nicotinamide adenine dinucleotide (NAD) cap from a subset of mRNAs by hydrolyzing the diphosphate linkage to produce nicotinamide mononucleotide (NMN) and 5' monophosphate mRNA. The NAD-cap is present at the 5'-end of some mRNAs and stabilizes RNA against 5'-processing. Has preference for mRNAs with a 5'-end purine. Catalyzes the hydrolysis of a broad range of dinucleotide pyrophosphates.</text>
</comment>
<comment type="catalytic activity">
    <reaction evidence="1">
        <text>a 5'-end NAD(+)-phospho-ribonucleoside in mRNA + H2O = a 5'-end phospho-adenosine-phospho-ribonucleoside in mRNA + beta-nicotinamide D-ribonucleotide + 2 H(+)</text>
        <dbReference type="Rhea" id="RHEA:60876"/>
        <dbReference type="Rhea" id="RHEA-COMP:15698"/>
        <dbReference type="Rhea" id="RHEA-COMP:15719"/>
        <dbReference type="ChEBI" id="CHEBI:14649"/>
        <dbReference type="ChEBI" id="CHEBI:15377"/>
        <dbReference type="ChEBI" id="CHEBI:15378"/>
        <dbReference type="ChEBI" id="CHEBI:144029"/>
        <dbReference type="ChEBI" id="CHEBI:144051"/>
    </reaction>
    <physiologicalReaction direction="left-to-right" evidence="1">
        <dbReference type="Rhea" id="RHEA:60877"/>
    </physiologicalReaction>
</comment>
<comment type="catalytic activity">
    <reaction evidence="1">
        <text>NAD(+) + H2O = beta-nicotinamide D-ribonucleotide + AMP + 2 H(+)</text>
        <dbReference type="Rhea" id="RHEA:11800"/>
        <dbReference type="ChEBI" id="CHEBI:14649"/>
        <dbReference type="ChEBI" id="CHEBI:15377"/>
        <dbReference type="ChEBI" id="CHEBI:15378"/>
        <dbReference type="ChEBI" id="CHEBI:57540"/>
        <dbReference type="ChEBI" id="CHEBI:456215"/>
        <dbReference type="EC" id="3.6.1.22"/>
    </reaction>
</comment>
<comment type="catalytic activity">
    <reaction evidence="1">
        <text>NADH + H2O = reduced beta-nicotinamide D-ribonucleotide + AMP + 2 H(+)</text>
        <dbReference type="Rhea" id="RHEA:48868"/>
        <dbReference type="ChEBI" id="CHEBI:15377"/>
        <dbReference type="ChEBI" id="CHEBI:15378"/>
        <dbReference type="ChEBI" id="CHEBI:57945"/>
        <dbReference type="ChEBI" id="CHEBI:90832"/>
        <dbReference type="ChEBI" id="CHEBI:456215"/>
        <dbReference type="EC" id="3.6.1.22"/>
    </reaction>
</comment>
<comment type="cofactor">
    <cofactor evidence="1">
        <name>Mg(2+)</name>
        <dbReference type="ChEBI" id="CHEBI:18420"/>
    </cofactor>
    <cofactor evidence="1">
        <name>Mn(2+)</name>
        <dbReference type="ChEBI" id="CHEBI:29035"/>
    </cofactor>
    <text evidence="1">Divalent metal cations. Mg(2+) or Mn(2+).</text>
</comment>
<comment type="cofactor">
    <cofactor evidence="1">
        <name>Zn(2+)</name>
        <dbReference type="ChEBI" id="CHEBI:29105"/>
    </cofactor>
    <text evidence="1">Binds 1 zinc ion per subunit.</text>
</comment>
<comment type="subunit">
    <text evidence="1">Homodimer.</text>
</comment>
<comment type="similarity">
    <text evidence="1">Belongs to the Nudix hydrolase family. NudC subfamily.</text>
</comment>
<evidence type="ECO:0000255" key="1">
    <source>
        <dbReference type="HAMAP-Rule" id="MF_00297"/>
    </source>
</evidence>
<organism>
    <name type="scientific">Escherichia coli O45:K1 (strain S88 / ExPEC)</name>
    <dbReference type="NCBI Taxonomy" id="585035"/>
    <lineage>
        <taxon>Bacteria</taxon>
        <taxon>Pseudomonadati</taxon>
        <taxon>Pseudomonadota</taxon>
        <taxon>Gammaproteobacteria</taxon>
        <taxon>Enterobacterales</taxon>
        <taxon>Enterobacteriaceae</taxon>
        <taxon>Escherichia</taxon>
    </lineage>
</organism>
<sequence>MDRIIEKLDHGWWVVSHEQKLWLPKGELPYGEAANFDLVGQRALQIGEWQGEPVWLVQLQRRHDMGSVRQVIDLDVGLFQLAGRGVQLAEFYRSHKYCGYCGHEMYPSKTEWAMLCSHCRERYYPQIAPCIIVAIRRDDSILLAQHTRHRNGVHTVLAGFVEVGETLEQAVAREVMEESGIKVKNLRYVTSQPWPFPQSLMTAFMAEYDSGEIVIDPKELLEAHWYRYDDLPLLPPPGTVARRLIEDTVAMCRAEYE</sequence>
<proteinExistence type="inferred from homology"/>
<feature type="chain" id="PRO_1000119460" description="NAD-capped RNA hydrolase NudC">
    <location>
        <begin position="1"/>
        <end position="257"/>
    </location>
</feature>
<feature type="domain" description="Nudix hydrolase" evidence="1">
    <location>
        <begin position="125"/>
        <end position="248"/>
    </location>
</feature>
<feature type="short sequence motif" description="Nudix box" evidence="1">
    <location>
        <begin position="159"/>
        <end position="180"/>
    </location>
</feature>
<feature type="binding site" evidence="1">
    <location>
        <position position="25"/>
    </location>
    <ligand>
        <name>substrate</name>
    </ligand>
</feature>
<feature type="binding site" evidence="1">
    <location>
        <position position="69"/>
    </location>
    <ligand>
        <name>substrate</name>
    </ligand>
</feature>
<feature type="binding site" evidence="1">
    <location>
        <position position="98"/>
    </location>
    <ligand>
        <name>Zn(2+)</name>
        <dbReference type="ChEBI" id="CHEBI:29105"/>
    </ligand>
</feature>
<feature type="binding site" evidence="1">
    <location>
        <position position="101"/>
    </location>
    <ligand>
        <name>Zn(2+)</name>
        <dbReference type="ChEBI" id="CHEBI:29105"/>
    </ligand>
</feature>
<feature type="binding site" evidence="1">
    <location>
        <position position="111"/>
    </location>
    <ligand>
        <name>substrate</name>
    </ligand>
</feature>
<feature type="binding site" evidence="1">
    <location>
        <position position="116"/>
    </location>
    <ligand>
        <name>Zn(2+)</name>
        <dbReference type="ChEBI" id="CHEBI:29105"/>
    </ligand>
</feature>
<feature type="binding site" evidence="1">
    <location>
        <position position="119"/>
    </location>
    <ligand>
        <name>Zn(2+)</name>
        <dbReference type="ChEBI" id="CHEBI:29105"/>
    </ligand>
</feature>
<feature type="binding site" evidence="1">
    <location>
        <position position="124"/>
    </location>
    <ligand>
        <name>substrate</name>
    </ligand>
</feature>
<feature type="binding site" evidence="1">
    <location>
        <position position="158"/>
    </location>
    <ligand>
        <name>a divalent metal cation</name>
        <dbReference type="ChEBI" id="CHEBI:60240"/>
        <label>1</label>
    </ligand>
</feature>
<feature type="binding site" evidence="1">
    <location>
        <position position="174"/>
    </location>
    <ligand>
        <name>a divalent metal cation</name>
        <dbReference type="ChEBI" id="CHEBI:60240"/>
        <label>2</label>
    </ligand>
</feature>
<feature type="binding site" evidence="1">
    <location>
        <position position="174"/>
    </location>
    <ligand>
        <name>a divalent metal cation</name>
        <dbReference type="ChEBI" id="CHEBI:60240"/>
        <label>3</label>
    </ligand>
</feature>
<feature type="binding site" evidence="1">
    <location>
        <position position="178"/>
    </location>
    <ligand>
        <name>a divalent metal cation</name>
        <dbReference type="ChEBI" id="CHEBI:60240"/>
        <label>1</label>
    </ligand>
</feature>
<feature type="binding site" evidence="1">
    <location>
        <position position="178"/>
    </location>
    <ligand>
        <name>a divalent metal cation</name>
        <dbReference type="ChEBI" id="CHEBI:60240"/>
        <label>3</label>
    </ligand>
</feature>
<feature type="binding site" evidence="1">
    <location>
        <begin position="192"/>
        <end position="199"/>
    </location>
    <ligand>
        <name>substrate</name>
    </ligand>
</feature>
<feature type="binding site" evidence="1">
    <location>
        <position position="219"/>
    </location>
    <ligand>
        <name>a divalent metal cation</name>
        <dbReference type="ChEBI" id="CHEBI:60240"/>
        <label>1</label>
    </ligand>
</feature>
<feature type="binding site" evidence="1">
    <location>
        <position position="219"/>
    </location>
    <ligand>
        <name>a divalent metal cation</name>
        <dbReference type="ChEBI" id="CHEBI:60240"/>
        <label>3</label>
    </ligand>
</feature>
<feature type="binding site" evidence="1">
    <location>
        <position position="241"/>
    </location>
    <ligand>
        <name>substrate</name>
    </ligand>
</feature>
<name>NUDC_ECO45</name>
<keyword id="KW-0378">Hydrolase</keyword>
<keyword id="KW-0460">Magnesium</keyword>
<keyword id="KW-0464">Manganese</keyword>
<keyword id="KW-0479">Metal-binding</keyword>
<keyword id="KW-0520">NAD</keyword>
<keyword id="KW-1185">Reference proteome</keyword>
<keyword id="KW-0862">Zinc</keyword>
<gene>
    <name evidence="1" type="primary">nudC</name>
    <name type="ordered locus">ECS88_4457</name>
</gene>